<evidence type="ECO:0000250" key="1">
    <source>
        <dbReference type="UniProtKB" id="Q9QXW9"/>
    </source>
</evidence>
<evidence type="ECO:0000250" key="2">
    <source>
        <dbReference type="UniProtKB" id="Q9WVR6"/>
    </source>
</evidence>
<evidence type="ECO:0000256" key="3">
    <source>
        <dbReference type="SAM" id="MobiDB-lite"/>
    </source>
</evidence>
<evidence type="ECO:0000269" key="4">
    <source>
    </source>
</evidence>
<evidence type="ECO:0000269" key="5">
    <source>
    </source>
</evidence>
<evidence type="ECO:0000269" key="6">
    <source>
    </source>
</evidence>
<evidence type="ECO:0000269" key="7">
    <source>
    </source>
</evidence>
<evidence type="ECO:0000269" key="8">
    <source>
    </source>
</evidence>
<evidence type="ECO:0000269" key="9">
    <source>
    </source>
</evidence>
<evidence type="ECO:0000269" key="10">
    <source>
    </source>
</evidence>
<evidence type="ECO:0000269" key="11">
    <source>
    </source>
</evidence>
<evidence type="ECO:0000269" key="12">
    <source>
    </source>
</evidence>
<evidence type="ECO:0000269" key="13">
    <source>
    </source>
</evidence>
<evidence type="ECO:0000269" key="14">
    <source>
    </source>
</evidence>
<evidence type="ECO:0000269" key="15">
    <source>
    </source>
</evidence>
<evidence type="ECO:0000269" key="16">
    <source>
    </source>
</evidence>
<evidence type="ECO:0000269" key="17">
    <source>
    </source>
</evidence>
<evidence type="ECO:0000303" key="18">
    <source>
    </source>
</evidence>
<evidence type="ECO:0000303" key="19">
    <source>
    </source>
</evidence>
<evidence type="ECO:0000303" key="20">
    <source ref="5"/>
</evidence>
<evidence type="ECO:0000305" key="21"/>
<evidence type="ECO:0000312" key="22">
    <source>
        <dbReference type="HGNC" id="HGNC:11066"/>
    </source>
</evidence>
<evidence type="ECO:0007744" key="23">
    <source>
        <dbReference type="PDB" id="7B00"/>
    </source>
</evidence>
<evidence type="ECO:0007744" key="24">
    <source>
        <dbReference type="PDB" id="7CMH"/>
    </source>
</evidence>
<evidence type="ECO:0007744" key="25">
    <source>
        <dbReference type="PDB" id="7CMI"/>
    </source>
</evidence>
<evidence type="ECO:0007829" key="26">
    <source>
        <dbReference type="PDB" id="7CMH"/>
    </source>
</evidence>
<evidence type="ECO:0007829" key="27">
    <source>
        <dbReference type="PDB" id="7CMI"/>
    </source>
</evidence>
<proteinExistence type="evidence at protein level"/>
<dbReference type="EMBL" id="AF135828">
    <property type="protein sequence ID" value="AAF05695.1"/>
    <property type="molecule type" value="mRNA"/>
</dbReference>
<dbReference type="EMBL" id="AF135829">
    <property type="protein sequence ID" value="AAF05696.1"/>
    <property type="molecule type" value="mRNA"/>
</dbReference>
<dbReference type="EMBL" id="AF135830">
    <property type="protein sequence ID" value="AAF05697.1"/>
    <property type="molecule type" value="mRNA"/>
</dbReference>
<dbReference type="EMBL" id="AF171669">
    <property type="protein sequence ID" value="AAF20381.1"/>
    <property type="molecule type" value="mRNA"/>
</dbReference>
<dbReference type="EMBL" id="Y18483">
    <property type="protein sequence ID" value="CAB40137.1"/>
    <property type="molecule type" value="mRNA"/>
</dbReference>
<dbReference type="EMBL" id="AB037669">
    <property type="protein sequence ID" value="BAB21519.1"/>
    <property type="molecule type" value="mRNA"/>
</dbReference>
<dbReference type="EMBL" id="BX248288">
    <property type="protein sequence ID" value="CAD62616.1"/>
    <property type="status" value="ALT_INIT"/>
    <property type="molecule type" value="mRNA"/>
</dbReference>
<dbReference type="EMBL" id="AK296702">
    <property type="protein sequence ID" value="BAG59296.1"/>
    <property type="molecule type" value="mRNA"/>
</dbReference>
<dbReference type="EMBL" id="AK300384">
    <property type="protein sequence ID" value="BAG62118.1"/>
    <property type="molecule type" value="mRNA"/>
</dbReference>
<dbReference type="EMBL" id="AK313465">
    <property type="protein sequence ID" value="BAG36251.1"/>
    <property type="molecule type" value="mRNA"/>
</dbReference>
<dbReference type="EMBL" id="AL117258">
    <property type="status" value="NOT_ANNOTATED_CDS"/>
    <property type="molecule type" value="Genomic_DNA"/>
</dbReference>
<dbReference type="EMBL" id="CH471078">
    <property type="protein sequence ID" value="EAW66181.1"/>
    <property type="molecule type" value="Genomic_DNA"/>
</dbReference>
<dbReference type="EMBL" id="CH471078">
    <property type="protein sequence ID" value="EAW66182.1"/>
    <property type="molecule type" value="Genomic_DNA"/>
</dbReference>
<dbReference type="EMBL" id="BC052250">
    <property type="protein sequence ID" value="AAH52250.1"/>
    <property type="molecule type" value="mRNA"/>
</dbReference>
<dbReference type="CCDS" id="CCDS41924.1">
    <molecule id="Q9UHI5-2"/>
</dbReference>
<dbReference type="CCDS" id="CCDS58304.1">
    <molecule id="Q9UHI5-3"/>
</dbReference>
<dbReference type="CCDS" id="CCDS58305.1">
    <molecule id="Q9UHI5-4"/>
</dbReference>
<dbReference type="CCDS" id="CCDS9590.1">
    <molecule id="Q9UHI5-1"/>
</dbReference>
<dbReference type="RefSeq" id="NP_001253965.1">
    <molecule id="Q9UHI5-4"/>
    <property type="nucleotide sequence ID" value="NM_001267036.1"/>
</dbReference>
<dbReference type="RefSeq" id="NP_001253966.1">
    <molecule id="Q9UHI5-3"/>
    <property type="nucleotide sequence ID" value="NM_001267037.2"/>
</dbReference>
<dbReference type="RefSeq" id="NP_036376.2">
    <molecule id="Q9UHI5-1"/>
    <property type="nucleotide sequence ID" value="NM_012244.3"/>
</dbReference>
<dbReference type="RefSeq" id="NP_877392.1">
    <molecule id="Q9UHI5-2"/>
    <property type="nucleotide sequence ID" value="NM_182728.3"/>
</dbReference>
<dbReference type="PDB" id="7B00">
    <property type="method" value="EM"/>
    <property type="resolution" value="3.98 A"/>
    <property type="chains" value="A=1-535"/>
</dbReference>
<dbReference type="PDB" id="7CMH">
    <property type="method" value="EM"/>
    <property type="resolution" value="3.40 A"/>
    <property type="chains" value="B=2-535"/>
</dbReference>
<dbReference type="PDB" id="7CMI">
    <property type="method" value="EM"/>
    <property type="resolution" value="2.90 A"/>
    <property type="chains" value="B=2-535"/>
</dbReference>
<dbReference type="PDB" id="8A6L">
    <property type="method" value="EM"/>
    <property type="resolution" value="3.18 A"/>
    <property type="chains" value="B=1-535"/>
</dbReference>
<dbReference type="PDBsum" id="7B00"/>
<dbReference type="PDBsum" id="7CMH"/>
<dbReference type="PDBsum" id="7CMI"/>
<dbReference type="PDBsum" id="8A6L"/>
<dbReference type="EMDB" id="EMD-0679"/>
<dbReference type="EMDB" id="EMD-11952"/>
<dbReference type="EMDB" id="EMD-15210"/>
<dbReference type="EMDB" id="EMD-30406"/>
<dbReference type="EMDB" id="EMD-30407"/>
<dbReference type="SMR" id="Q9UHI5"/>
<dbReference type="BioGRID" id="116996">
    <property type="interactions" value="31"/>
</dbReference>
<dbReference type="ComplexPortal" id="CPX-8186">
    <property type="entry name" value="LAT2-4F2 heteromeric amino acid transporter complex"/>
</dbReference>
<dbReference type="CORUM" id="Q9UHI5"/>
<dbReference type="FunCoup" id="Q9UHI5">
    <property type="interactions" value="325"/>
</dbReference>
<dbReference type="IntAct" id="Q9UHI5">
    <property type="interactions" value="34"/>
</dbReference>
<dbReference type="STRING" id="9606.ENSP00000320378"/>
<dbReference type="BindingDB" id="Q9UHI5"/>
<dbReference type="ChEMBL" id="CHEMBL4301"/>
<dbReference type="DrugBank" id="DB00160">
    <property type="generic name" value="Alanine"/>
</dbReference>
<dbReference type="DrugBank" id="DB00130">
    <property type="generic name" value="L-Glutamine"/>
</dbReference>
<dbReference type="DrugBank" id="DB01235">
    <property type="generic name" value="Levodopa"/>
</dbReference>
<dbReference type="DrugBank" id="DB00120">
    <property type="generic name" value="Phenylalanine"/>
</dbReference>
<dbReference type="DrugBank" id="DB02750">
    <property type="generic name" value="S-(Methylmercury)-L-Cysteine"/>
</dbReference>
<dbReference type="TCDB" id="2.A.3.8.20">
    <property type="family name" value="the amino acid-polyamine-organocation (apc) family"/>
</dbReference>
<dbReference type="iPTMnet" id="Q9UHI5"/>
<dbReference type="PhosphoSitePlus" id="Q9UHI5"/>
<dbReference type="SwissPalm" id="Q9UHI5"/>
<dbReference type="BioMuta" id="SLC7A8"/>
<dbReference type="DMDM" id="12643348"/>
<dbReference type="jPOST" id="Q9UHI5"/>
<dbReference type="MassIVE" id="Q9UHI5"/>
<dbReference type="PaxDb" id="9606-ENSP00000320378"/>
<dbReference type="PeptideAtlas" id="Q9UHI5"/>
<dbReference type="ProteomicsDB" id="23734"/>
<dbReference type="ProteomicsDB" id="4485"/>
<dbReference type="ProteomicsDB" id="5131"/>
<dbReference type="ProteomicsDB" id="84356">
    <molecule id="Q9UHI5-1"/>
</dbReference>
<dbReference type="Antibodypedia" id="22403">
    <property type="antibodies" value="245 antibodies from 24 providers"/>
</dbReference>
<dbReference type="DNASU" id="23428"/>
<dbReference type="Ensembl" id="ENST00000316902.12">
    <molecule id="Q9UHI5-1"/>
    <property type="protein sequence ID" value="ENSP00000320378.7"/>
    <property type="gene ID" value="ENSG00000092068.21"/>
</dbReference>
<dbReference type="Ensembl" id="ENST00000422941.6">
    <molecule id="Q9UHI5-3"/>
    <property type="protein sequence ID" value="ENSP00000416398.2"/>
    <property type="gene ID" value="ENSG00000092068.21"/>
</dbReference>
<dbReference type="Ensembl" id="ENST00000453702.5">
    <molecule id="Q9UHI5-2"/>
    <property type="protein sequence ID" value="ENSP00000391577.1"/>
    <property type="gene ID" value="ENSG00000092068.21"/>
</dbReference>
<dbReference type="Ensembl" id="ENST00000529705.6">
    <molecule id="Q9UHI5-4"/>
    <property type="protein sequence ID" value="ENSP00000434345.2"/>
    <property type="gene ID" value="ENSG00000092068.21"/>
</dbReference>
<dbReference type="GeneID" id="23428"/>
<dbReference type="KEGG" id="hsa:23428"/>
<dbReference type="MANE-Select" id="ENST00000316902.12">
    <property type="protein sequence ID" value="ENSP00000320378.7"/>
    <property type="RefSeq nucleotide sequence ID" value="NM_012244.4"/>
    <property type="RefSeq protein sequence ID" value="NP_036376.2"/>
</dbReference>
<dbReference type="UCSC" id="uc001wix.5">
    <molecule id="Q9UHI5-1"/>
    <property type="organism name" value="human"/>
</dbReference>
<dbReference type="AGR" id="HGNC:11066"/>
<dbReference type="CTD" id="23428"/>
<dbReference type="DisGeNET" id="23428"/>
<dbReference type="GeneCards" id="SLC7A8"/>
<dbReference type="HGNC" id="HGNC:11066">
    <property type="gene designation" value="SLC7A8"/>
</dbReference>
<dbReference type="HPA" id="ENSG00000092068">
    <property type="expression patterns" value="Tissue enhanced (parathyroid)"/>
</dbReference>
<dbReference type="MIM" id="604235">
    <property type="type" value="gene"/>
</dbReference>
<dbReference type="neXtProt" id="NX_Q9UHI5"/>
<dbReference type="OpenTargets" id="ENSG00000092068"/>
<dbReference type="PharmGKB" id="PA35926"/>
<dbReference type="VEuPathDB" id="HostDB:ENSG00000092068"/>
<dbReference type="eggNOG" id="KOG1287">
    <property type="taxonomic scope" value="Eukaryota"/>
</dbReference>
<dbReference type="GeneTree" id="ENSGT00940000158278"/>
<dbReference type="HOGENOM" id="CLU_007946_3_0_1"/>
<dbReference type="InParanoid" id="Q9UHI5"/>
<dbReference type="OMA" id="WVSNAAL"/>
<dbReference type="OrthoDB" id="3257095at2759"/>
<dbReference type="PAN-GO" id="Q9UHI5">
    <property type="GO annotations" value="4 GO annotations based on evolutionary models"/>
</dbReference>
<dbReference type="PhylomeDB" id="Q9UHI5"/>
<dbReference type="TreeFam" id="TF313355"/>
<dbReference type="BioCyc" id="MetaCyc:ENSG00000092068-MONOMER"/>
<dbReference type="PathwayCommons" id="Q9UHI5"/>
<dbReference type="Reactome" id="R-HSA-210991">
    <property type="pathway name" value="Basigin interactions"/>
</dbReference>
<dbReference type="Reactome" id="R-HSA-352230">
    <property type="pathway name" value="Amino acid transport across the plasma membrane"/>
</dbReference>
<dbReference type="SABIO-RK" id="Q9UHI5"/>
<dbReference type="SignaLink" id="Q9UHI5"/>
<dbReference type="BioGRID-ORCS" id="23428">
    <property type="hits" value="164 hits in 1162 CRISPR screens"/>
</dbReference>
<dbReference type="ChiTaRS" id="SLC7A8">
    <property type="organism name" value="human"/>
</dbReference>
<dbReference type="GeneWiki" id="SLC7A8"/>
<dbReference type="GenomeRNAi" id="23428"/>
<dbReference type="Pharos" id="Q9UHI5">
    <property type="development level" value="Tbio"/>
</dbReference>
<dbReference type="PRO" id="PR:Q9UHI5"/>
<dbReference type="Proteomes" id="UP000005640">
    <property type="component" value="Chromosome 14"/>
</dbReference>
<dbReference type="RNAct" id="Q9UHI5">
    <property type="molecule type" value="protein"/>
</dbReference>
<dbReference type="Bgee" id="ENSG00000092068">
    <property type="expression patterns" value="Expressed in islet of Langerhans and 204 other cell types or tissues"/>
</dbReference>
<dbReference type="ExpressionAtlas" id="Q9UHI5">
    <property type="expression patterns" value="baseline and differential"/>
</dbReference>
<dbReference type="GO" id="GO:0016324">
    <property type="term" value="C:apical plasma membrane"/>
    <property type="evidence" value="ECO:0000250"/>
    <property type="project" value="ARUK-UCL"/>
</dbReference>
<dbReference type="GO" id="GO:0009925">
    <property type="term" value="C:basal plasma membrane"/>
    <property type="evidence" value="ECO:0000314"/>
    <property type="project" value="ARUK-UCL"/>
</dbReference>
<dbReference type="GO" id="GO:0016323">
    <property type="term" value="C:basolateral plasma membrane"/>
    <property type="evidence" value="ECO:0000314"/>
    <property type="project" value="UniProtKB"/>
</dbReference>
<dbReference type="GO" id="GO:0031528">
    <property type="term" value="C:microvillus membrane"/>
    <property type="evidence" value="ECO:0000314"/>
    <property type="project" value="ARUK-UCL"/>
</dbReference>
<dbReference type="GO" id="GO:0005886">
    <property type="term" value="C:plasma membrane"/>
    <property type="evidence" value="ECO:0000314"/>
    <property type="project" value="UniProtKB"/>
</dbReference>
<dbReference type="GO" id="GO:0015171">
    <property type="term" value="F:amino acid transmembrane transporter activity"/>
    <property type="evidence" value="ECO:0000314"/>
    <property type="project" value="UniProtKB"/>
</dbReference>
<dbReference type="GO" id="GO:0015297">
    <property type="term" value="F:antiporter activity"/>
    <property type="evidence" value="ECO:0000314"/>
    <property type="project" value="UniProtKB"/>
</dbReference>
<dbReference type="GO" id="GO:0015187">
    <property type="term" value="F:glycine transmembrane transporter activity"/>
    <property type="evidence" value="ECO:0000250"/>
    <property type="project" value="ARUK-UCL"/>
</dbReference>
<dbReference type="GO" id="GO:0015180">
    <property type="term" value="F:L-alanine transmembrane transporter activity"/>
    <property type="evidence" value="ECO:0000316"/>
    <property type="project" value="ARUK-UCL"/>
</dbReference>
<dbReference type="GO" id="GO:0015179">
    <property type="term" value="F:L-amino acid transmembrane transporter activity"/>
    <property type="evidence" value="ECO:0000318"/>
    <property type="project" value="GO_Central"/>
</dbReference>
<dbReference type="GO" id="GO:0015190">
    <property type="term" value="F:L-leucine transmembrane transporter activity"/>
    <property type="evidence" value="ECO:0000314"/>
    <property type="project" value="ARUK-UCL"/>
</dbReference>
<dbReference type="GO" id="GO:0015175">
    <property type="term" value="F:neutral L-amino acid transmembrane transporter activity"/>
    <property type="evidence" value="ECO:0000314"/>
    <property type="project" value="UniProtKB"/>
</dbReference>
<dbReference type="GO" id="GO:0015101">
    <property type="term" value="F:organic cation transmembrane transporter activity"/>
    <property type="evidence" value="ECO:0000314"/>
    <property type="project" value="UniProtKB"/>
</dbReference>
<dbReference type="GO" id="GO:0042605">
    <property type="term" value="F:peptide antigen binding"/>
    <property type="evidence" value="ECO:0000250"/>
    <property type="project" value="UniProtKB"/>
</dbReference>
<dbReference type="GO" id="GO:0046982">
    <property type="term" value="F:protein heterodimerization activity"/>
    <property type="evidence" value="ECO:0000314"/>
    <property type="project" value="UniProtKB"/>
</dbReference>
<dbReference type="GO" id="GO:0015349">
    <property type="term" value="F:thyroid hormone transmembrane transporter activity"/>
    <property type="evidence" value="ECO:0000314"/>
    <property type="project" value="ARUK-UCL"/>
</dbReference>
<dbReference type="GO" id="GO:0019534">
    <property type="term" value="F:toxin transmembrane transporter activity"/>
    <property type="evidence" value="ECO:0000314"/>
    <property type="project" value="UniProtKB"/>
</dbReference>
<dbReference type="GO" id="GO:0089718">
    <property type="term" value="P:amino acid import across plasma membrane"/>
    <property type="evidence" value="ECO:0000314"/>
    <property type="project" value="ARUK-UCL"/>
</dbReference>
<dbReference type="GO" id="GO:0003333">
    <property type="term" value="P:amino acid transmembrane transport"/>
    <property type="evidence" value="ECO:0000318"/>
    <property type="project" value="GO_Central"/>
</dbReference>
<dbReference type="GO" id="GO:0006865">
    <property type="term" value="P:amino acid transport"/>
    <property type="evidence" value="ECO:0000314"/>
    <property type="project" value="UniProtKB"/>
</dbReference>
<dbReference type="GO" id="GO:0015816">
    <property type="term" value="P:glycine transport"/>
    <property type="evidence" value="ECO:0000250"/>
    <property type="project" value="ARUK-UCL"/>
</dbReference>
<dbReference type="GO" id="GO:1904273">
    <property type="term" value="P:L-alanine import across plasma membrane"/>
    <property type="evidence" value="ECO:0000316"/>
    <property type="project" value="ARUK-UCL"/>
</dbReference>
<dbReference type="GO" id="GO:1903801">
    <property type="term" value="P:L-leucine import across plasma membrane"/>
    <property type="evidence" value="ECO:0000314"/>
    <property type="project" value="ARUK-UCL"/>
</dbReference>
<dbReference type="GO" id="GO:0015820">
    <property type="term" value="P:L-leucine transport"/>
    <property type="evidence" value="ECO:0000250"/>
    <property type="project" value="ARUK-UCL"/>
</dbReference>
<dbReference type="GO" id="GO:0015804">
    <property type="term" value="P:neutral amino acid transport"/>
    <property type="evidence" value="ECO:0000314"/>
    <property type="project" value="UniProtKB"/>
</dbReference>
<dbReference type="GO" id="GO:0035524">
    <property type="term" value="P:proline transmembrane transport"/>
    <property type="evidence" value="ECO:0000250"/>
    <property type="project" value="ARUK-UCL"/>
</dbReference>
<dbReference type="GO" id="GO:0070327">
    <property type="term" value="P:thyroid hormone transport"/>
    <property type="evidence" value="ECO:0000314"/>
    <property type="project" value="ARUK-UCL"/>
</dbReference>
<dbReference type="GO" id="GO:0150104">
    <property type="term" value="P:transport across blood-brain barrier"/>
    <property type="evidence" value="ECO:0000303"/>
    <property type="project" value="ARUK-UCL"/>
</dbReference>
<dbReference type="GO" id="GO:0015827">
    <property type="term" value="P:tryptophan transport"/>
    <property type="evidence" value="ECO:0000250"/>
    <property type="project" value="ARUK-UCL"/>
</dbReference>
<dbReference type="GO" id="GO:0015829">
    <property type="term" value="P:valine transport"/>
    <property type="evidence" value="ECO:0000250"/>
    <property type="project" value="ARUK-UCL"/>
</dbReference>
<dbReference type="FunFam" id="1.20.1740.10:FF:000008">
    <property type="entry name" value="large neutral amino acids transporter small subunit 2"/>
    <property type="match status" value="1"/>
</dbReference>
<dbReference type="Gene3D" id="1.20.1740.10">
    <property type="entry name" value="Amino acid/polyamine transporter I"/>
    <property type="match status" value="1"/>
</dbReference>
<dbReference type="InterPro" id="IPR002293">
    <property type="entry name" value="AA/rel_permease1"/>
</dbReference>
<dbReference type="InterPro" id="IPR050598">
    <property type="entry name" value="AminoAcid_Transporter"/>
</dbReference>
<dbReference type="InterPro" id="IPR004760">
    <property type="entry name" value="L_AA_transporter"/>
</dbReference>
<dbReference type="NCBIfam" id="TIGR00911">
    <property type="entry name" value="2A0308"/>
    <property type="match status" value="1"/>
</dbReference>
<dbReference type="PANTHER" id="PTHR11785">
    <property type="entry name" value="AMINO ACID TRANSPORTER"/>
    <property type="match status" value="1"/>
</dbReference>
<dbReference type="PANTHER" id="PTHR11785:SF113">
    <property type="entry name" value="LARGE NEUTRAL AMINO ACIDS TRANSPORTER SMALL SUBUNIT 2"/>
    <property type="match status" value="1"/>
</dbReference>
<dbReference type="Pfam" id="PF13520">
    <property type="entry name" value="AA_permease_2"/>
    <property type="match status" value="1"/>
</dbReference>
<dbReference type="PIRSF" id="PIRSF006060">
    <property type="entry name" value="AA_transporter"/>
    <property type="match status" value="1"/>
</dbReference>
<feature type="chain" id="PRO_0000054273" description="Large neutral amino acids transporter small subunit 2">
    <location>
        <begin position="1"/>
        <end position="535"/>
    </location>
</feature>
<feature type="topological domain" description="Cytoplasmic" evidence="21">
    <location>
        <begin position="1"/>
        <end position="44"/>
    </location>
</feature>
<feature type="transmembrane region" description="Helical; Name=1" evidence="16 24">
    <location>
        <begin position="45"/>
        <end position="65"/>
    </location>
</feature>
<feature type="topological domain" description="Extracellular" evidence="21">
    <location>
        <begin position="66"/>
        <end position="73"/>
    </location>
</feature>
<feature type="transmembrane region" description="Helical; Name=2" evidence="16 24">
    <location>
        <begin position="74"/>
        <end position="95"/>
    </location>
</feature>
<feature type="topological domain" description="Cytoplasmic" evidence="21">
    <location>
        <begin position="96"/>
        <end position="116"/>
    </location>
</feature>
<feature type="transmembrane region" description="Helical; Name=3" evidence="16 24">
    <location>
        <begin position="117"/>
        <end position="149"/>
    </location>
</feature>
<feature type="topological domain" description="Extracellular" evidence="21">
    <location>
        <begin position="150"/>
        <end position="157"/>
    </location>
</feature>
<feature type="transmembrane region" description="Helical; Name=4" evidence="16 24">
    <location>
        <begin position="158"/>
        <end position="178"/>
    </location>
</feature>
<feature type="topological domain" description="Cytoplasmic" evidence="21">
    <location>
        <begin position="179"/>
        <end position="181"/>
    </location>
</feature>
<feature type="transmembrane region" description="Helical; Name=5" evidence="16 24">
    <location>
        <begin position="182"/>
        <end position="210"/>
    </location>
</feature>
<feature type="topological domain" description="Extracellular" evidence="21">
    <location>
        <begin position="211"/>
        <end position="230"/>
    </location>
</feature>
<feature type="transmembrane region" description="Helical; Name=6" evidence="16 24">
    <location>
        <begin position="231"/>
        <end position="252"/>
    </location>
</feature>
<feature type="topological domain" description="Cytoplasmic" evidence="21">
    <location>
        <begin position="253"/>
        <end position="265"/>
    </location>
</feature>
<feature type="transmembrane region" description="Helical; Name=7" evidence="16 24">
    <location>
        <begin position="266"/>
        <end position="287"/>
    </location>
</feature>
<feature type="topological domain" description="Extracellular" evidence="21">
    <location>
        <begin position="288"/>
        <end position="312"/>
    </location>
</feature>
<feature type="transmembrane region" description="Helical; Name=8" evidence="16 24">
    <location>
        <begin position="313"/>
        <end position="338"/>
    </location>
</feature>
<feature type="topological domain" description="Cytoplasmic" evidence="21">
    <location>
        <begin position="339"/>
        <end position="364"/>
    </location>
</feature>
<feature type="transmembrane region" description="Helical; Name=9" evidence="16 24">
    <location>
        <begin position="365"/>
        <end position="382"/>
    </location>
</feature>
<feature type="topological domain" description="Extracellular" evidence="21">
    <location>
        <begin position="383"/>
        <end position="386"/>
    </location>
</feature>
<feature type="transmembrane region" description="Helical; Name=10" evidence="16 24">
    <location>
        <begin position="387"/>
        <end position="408"/>
    </location>
</feature>
<feature type="topological domain" description="Cytoplasmic" evidence="21">
    <location>
        <begin position="409"/>
        <end position="423"/>
    </location>
</feature>
<feature type="transmembrane region" description="Helical; Name=11" evidence="16 24">
    <location>
        <begin position="424"/>
        <end position="446"/>
    </location>
</feature>
<feature type="transmembrane region" description="Helical; Name=12" evidence="16 24">
    <location>
        <begin position="447"/>
        <end position="466"/>
    </location>
</feature>
<feature type="topological domain" description="Cytoplasmic" evidence="21">
    <location>
        <begin position="467"/>
        <end position="535"/>
    </location>
</feature>
<feature type="region of interest" description="Disordered" evidence="3">
    <location>
        <begin position="1"/>
        <end position="30"/>
    </location>
</feature>
<feature type="region of interest" description="Disordered" evidence="3">
    <location>
        <begin position="502"/>
        <end position="535"/>
    </location>
</feature>
<feature type="compositionally biased region" description="Basic and acidic residues" evidence="3">
    <location>
        <begin position="1"/>
        <end position="17"/>
    </location>
</feature>
<feature type="compositionally biased region" description="Polar residues" evidence="3">
    <location>
        <begin position="514"/>
        <end position="523"/>
    </location>
</feature>
<feature type="binding site" evidence="16 25">
    <location>
        <position position="53"/>
    </location>
    <ligand>
        <name>L-leucine</name>
        <dbReference type="ChEBI" id="CHEBI:57427"/>
        <note>substrate</note>
    </ligand>
</feature>
<feature type="binding site" evidence="16 24">
    <location>
        <position position="134"/>
    </location>
    <ligand>
        <name>L-tryptophan</name>
        <dbReference type="ChEBI" id="CHEBI:57912"/>
        <note>substrate</note>
    </ligand>
</feature>
<feature type="binding site" evidence="16 25">
    <location>
        <position position="246"/>
    </location>
    <ligand>
        <name>L-leucine</name>
        <dbReference type="ChEBI" id="CHEBI:57427"/>
        <note>substrate</note>
    </ligand>
</feature>
<feature type="binding site" evidence="16 24">
    <location>
        <position position="395"/>
    </location>
    <ligand>
        <name>L-tryptophan</name>
        <dbReference type="ChEBI" id="CHEBI:57912"/>
        <note>substrate</note>
    </ligand>
</feature>
<feature type="site" description="Important for substrate specificity" evidence="17">
    <location>
        <position position="134"/>
    </location>
</feature>
<feature type="site" description="Important for substrate specificity" evidence="17">
    <location>
        <position position="246"/>
    </location>
</feature>
<feature type="modified residue" description="Phosphoserine" evidence="1">
    <location>
        <position position="29"/>
    </location>
</feature>
<feature type="disulfide bond" description="Interchain (with C-210 in SLC3A2)" evidence="16 17">
    <location>
        <position position="154"/>
    </location>
</feature>
<feature type="splice variant" id="VSP_046945" description="In isoform 3." evidence="19">
    <original>MEEGARHRNNTEKKHPGGGESDASPEAGSGGGGVALKKEIGLVSACGIIVGNIIGSGIFVSPKGVLENAGSVGLALIVWIVTGFITVVGALCYAELGVTIPKSGGDYSYVKDIFGGLAGFLRLWIAVLVIYPTNQAVIALTFSNYVLQPLFPTCFPPESGLRLLAAICLLLLTWVNCSSVRWATRVQDIFTAGKLLALALIIIMGIVQICKGEYFWLEPKNAFENFQEPDIGLVALAFLQGSFAYGGWNFLNYVTEELVDPYK</original>
    <variation>MGQLFQCAVGHPGSRHLHSWEAPGLGPDYHHGDCTDMQR</variation>
    <location>
        <begin position="1"/>
        <end position="263"/>
    </location>
</feature>
<feature type="splice variant" id="VSP_046946" description="In isoform 2." evidence="20">
    <location>
        <begin position="1"/>
        <end position="203"/>
    </location>
</feature>
<feature type="splice variant" id="VSP_046947" description="In isoform 4." evidence="19">
    <original>MEEGARHRNNTEKKHPGGGESDASPEAGSGGGGVALKKEIGLVSACGIIVGNIIGSGIFVSPKGVLENAGSVGLALIVWIVTGFITVVGALCYAELGVTIPKSGGDYSYVKDIFGGLAGFLRLWIAVLVIYPTNQAVIALTFSNYVLQPLFPTCFPPESGLRLLAAICL</original>
    <variation>MGQYGQELSWKCLVKAVCLQEHSQPSQLLCTLLLCWCVLGRERPFRKAQSTSSPLEGVPRFLKR</variation>
    <location>
        <begin position="1"/>
        <end position="169"/>
    </location>
</feature>
<feature type="sequence variant" id="VAR_088247" description="Found in a patient with age-related hearing loss; does not affect L-alanine transport activity. Decreases L-tyrosine transport activity; dbSNP:rs142951280." evidence="14">
    <original>V</original>
    <variation>I</variation>
    <location>
        <position position="302"/>
    </location>
</feature>
<feature type="sequence variant" id="VAR_088248" description="Found in a patient with age-related hearing loss; strongly decreased L-alanine transport activity. Decreases L-tyrosine transport activity; dbSNP:rs758342760." evidence="14">
    <original>T</original>
    <variation>M</variation>
    <location>
        <position position="402"/>
    </location>
</feature>
<feature type="sequence variant" id="VAR_088249" description="Found in a patient with age-related hearing loss; decreases L-alanine transport activity. Decreases L-tyrosine transport activity; dbSNP:rs146946494." evidence="14">
    <original>R</original>
    <variation>C</variation>
    <location>
        <position position="418"/>
    </location>
</feature>
<feature type="sequence variant" id="VAR_088250" description="Found in a patient with age-related hearing loss; strongly decreases L-alanine transport activity. Decreases L-tyrosine transport activity. Decreases cell membrane localization; dbSNP:rs2048595742." evidence="14">
    <original>V</original>
    <variation>E</variation>
    <location>
        <position position="460"/>
    </location>
</feature>
<feature type="mutagenesis site" description="Nearly complete reduction of glycine, L-alanine, and L-glutamine uptake. Minimal effect on the transport of L-isoleucine, L-histidine and L-tryptophan." evidence="17">
    <original>Y</original>
    <variation>A</variation>
    <location>
        <position position="93"/>
    </location>
</feature>
<feature type="mutagenesis site" description="Reduces L-leucine uptake activity. Abolishes L-tryptophan uptake." evidence="16 17">
    <original>N</original>
    <variation>Q</variation>
    <location>
        <position position="134"/>
    </location>
</feature>
<feature type="mutagenesis site" description="The substrate specificity changed dramatically reducing L-glutamine, glycine and L-alanine uptake activity thus mimicking the selectivity of SLC7A5." evidence="16 17">
    <original>N</original>
    <variation>S</variation>
    <location>
        <position position="134"/>
    </location>
</feature>
<feature type="mutagenesis site" description="Does not affect protein expression, plasma membrane localization, or L-alanine uptake." evidence="17">
    <original>W</original>
    <variation>A</variation>
    <location>
        <position position="174"/>
    </location>
</feature>
<feature type="mutagenesis site" description="Abolishes leucine and tryptophan transport activities." evidence="16">
    <original>F</original>
    <variation>A</variation>
    <location>
        <position position="243"/>
    </location>
</feature>
<feature type="mutagenesis site" description="Strong decrease in the uptake of large substrates L-tryptophan, L-glutamine, and L-histidine but increases the uptake of small neutral amino acids glycine and L-alanine." evidence="17">
    <original>G</original>
    <variation>S</variation>
    <location>
        <position position="246"/>
    </location>
</feature>
<feature type="mutagenesis site" description="Strongly reduces L-leucine uptake activity. Strongly reduces L-tryptophan uptake activity." evidence="16">
    <original>N</original>
    <variation>Q</variation>
    <location>
        <position position="395"/>
    </location>
</feature>
<feature type="mutagenesis site" description="Strongly reduces L-leucine uptake activity." evidence="16">
    <original>Y</original>
    <variation>A</variation>
    <location>
        <position position="396"/>
    </location>
</feature>
<feature type="sequence conflict" description="In Ref. 3; CAB40137." evidence="21" ref="3">
    <original>N</original>
    <variation>D</variation>
    <location>
        <position position="225"/>
    </location>
</feature>
<feature type="sequence conflict" description="In Ref. 3; CAB40137." evidence="21" ref="3">
    <original>V</original>
    <variation>G</variation>
    <location>
        <position position="401"/>
    </location>
</feature>
<feature type="sequence conflict" description="In Ref. 1; AAF05696/AAF05697." evidence="21" ref="1">
    <original>G</original>
    <variation>R</variation>
    <location>
        <position position="503"/>
    </location>
</feature>
<feature type="helix" evidence="27">
    <location>
        <begin position="42"/>
        <end position="53"/>
    </location>
</feature>
<feature type="strand" evidence="27">
    <location>
        <begin position="55"/>
        <end position="57"/>
    </location>
</feature>
<feature type="turn" evidence="27">
    <location>
        <begin position="58"/>
        <end position="61"/>
    </location>
</feature>
<feature type="helix" evidence="27">
    <location>
        <begin position="62"/>
        <end position="69"/>
    </location>
</feature>
<feature type="helix" evidence="27">
    <location>
        <begin position="72"/>
        <end position="99"/>
    </location>
</feature>
<feature type="turn" evidence="26">
    <location>
        <begin position="103"/>
        <end position="105"/>
    </location>
</feature>
<feature type="helix" evidence="27">
    <location>
        <begin position="106"/>
        <end position="112"/>
    </location>
</feature>
<feature type="helix" evidence="27">
    <location>
        <begin position="117"/>
        <end position="128"/>
    </location>
</feature>
<feature type="helix" evidence="27">
    <location>
        <begin position="130"/>
        <end position="146"/>
    </location>
</feature>
<feature type="strand" evidence="27">
    <location>
        <begin position="147"/>
        <end position="154"/>
    </location>
</feature>
<feature type="helix" evidence="27">
    <location>
        <begin position="158"/>
        <end position="177"/>
    </location>
</feature>
<feature type="helix" evidence="27">
    <location>
        <begin position="180"/>
        <end position="185"/>
    </location>
</feature>
<feature type="helix" evidence="27">
    <location>
        <begin position="189"/>
        <end position="209"/>
    </location>
</feature>
<feature type="turn" evidence="27">
    <location>
        <begin position="210"/>
        <end position="212"/>
    </location>
</feature>
<feature type="strand" evidence="27">
    <location>
        <begin position="215"/>
        <end position="217"/>
    </location>
</feature>
<feature type="helix" evidence="26">
    <location>
        <begin position="231"/>
        <end position="233"/>
    </location>
</feature>
<feature type="helix" evidence="27">
    <location>
        <begin position="234"/>
        <end position="241"/>
    </location>
</feature>
<feature type="turn" evidence="27">
    <location>
        <begin position="242"/>
        <end position="245"/>
    </location>
</feature>
<feature type="turn" evidence="27">
    <location>
        <begin position="249"/>
        <end position="254"/>
    </location>
</feature>
<feature type="helix" evidence="27">
    <location>
        <begin position="255"/>
        <end position="257"/>
    </location>
</feature>
<feature type="strand" evidence="27">
    <location>
        <begin position="258"/>
        <end position="260"/>
    </location>
</feature>
<feature type="strand" evidence="27">
    <location>
        <begin position="262"/>
        <end position="265"/>
    </location>
</feature>
<feature type="helix" evidence="27">
    <location>
        <begin position="266"/>
        <end position="288"/>
    </location>
</feature>
<feature type="helix" evidence="27">
    <location>
        <begin position="293"/>
        <end position="296"/>
    </location>
</feature>
<feature type="helix" evidence="27">
    <location>
        <begin position="302"/>
        <end position="308"/>
    </location>
</feature>
<feature type="helix" evidence="27">
    <location>
        <begin position="314"/>
        <end position="335"/>
    </location>
</feature>
<feature type="turn" evidence="26">
    <location>
        <begin position="336"/>
        <end position="338"/>
    </location>
</feature>
<feature type="helix" evidence="27">
    <location>
        <begin position="339"/>
        <end position="345"/>
    </location>
</feature>
<feature type="turn" evidence="27">
    <location>
        <begin position="346"/>
        <end position="348"/>
    </location>
</feature>
<feature type="strand" evidence="27">
    <location>
        <begin position="357"/>
        <end position="361"/>
    </location>
</feature>
<feature type="helix" evidence="27">
    <location>
        <begin position="365"/>
        <end position="377"/>
    </location>
</feature>
<feature type="strand" evidence="27">
    <location>
        <begin position="380"/>
        <end position="382"/>
    </location>
</feature>
<feature type="helix" evidence="27">
    <location>
        <begin position="386"/>
        <end position="411"/>
    </location>
</feature>
<feature type="helix" evidence="27">
    <location>
        <begin position="426"/>
        <end position="444"/>
    </location>
</feature>
<feature type="helix" evidence="27">
    <location>
        <begin position="446"/>
        <end position="466"/>
    </location>
</feature>
<feature type="helix" evidence="27">
    <location>
        <begin position="474"/>
        <end position="490"/>
    </location>
</feature>
<keyword id="KW-0002">3D-structure</keyword>
<keyword id="KW-0025">Alternative splicing</keyword>
<keyword id="KW-0029">Amino-acid transport</keyword>
<keyword id="KW-0050">Antiport</keyword>
<keyword id="KW-1003">Cell membrane</keyword>
<keyword id="KW-1015">Disulfide bond</keyword>
<keyword id="KW-0472">Membrane</keyword>
<keyword id="KW-0597">Phosphoprotein</keyword>
<keyword id="KW-1267">Proteomics identification</keyword>
<keyword id="KW-1185">Reference proteome</keyword>
<keyword id="KW-0812">Transmembrane</keyword>
<keyword id="KW-1133">Transmembrane helix</keyword>
<keyword id="KW-0813">Transport</keyword>
<comment type="function">
    <text evidence="1 2 4 6 7 8 9 10 11 12 14 16 17">Associates with SLC3A2 to form a functional heterodimeric complex that translocates small and large neutral amino acids with broad specificity and a stoichiometry of 1:1. Functions as amino acid antiporter mediating the influx of extracellular essential amino acids mainly in exchange with the efflux of highly concentrated intracellular amino acids (PubMed:10391915, PubMed:11311135, PubMed:11847106, PubMed:12716892, PubMed:15081149, PubMed:15918515, PubMed:29355479, PubMed:33298890, PubMed:34848541). Has relatively symmetrical selectivities but strongly asymmetrical substrate affinities at both the intracellular and extracellular sides of the transporter (PubMed:11847106). This asymmetry allows SLC7A8 to regulate intracellular amino acid pools (mM concentrations) by exchange with external amino acids (uM concentration range), equilibrating the relative concentrations of different amino acids across the plasma membrane instead of mediating their net uptake (PubMed:10391915, PubMed:11847106). May play an essential role in the reabsorption of neutral amino acids from the epithelial cells to the bloodstream in the kidney (PubMed:12716892). Involved in the uptake of methylmercury (MeHg) when administered as the L-cysteine or D,L-homocysteine complexes, and hence plays a role in metal ion homeostasis and toxicity (PubMed:12117417). Involved in the cellular activity of small molecular weight nitrosothiols, via the stereoselective transport of L-nitrosocysteine (L-CNSO) across the transmembrane (PubMed:15769744). Imports the thyroid hormone diiodothyronine (T2) and to a smaller extent triiodothyronine (T3) but not rT 3 or thyroxine (T4) (By similarity). Mediates the uptake of L-DOPA (By similarity). May participate in auditory function (By similarity).</text>
</comment>
<comment type="catalytic activity">
    <reaction evidence="7">
        <text>L-histidine(in) + L-phenylalanine(out) = L-histidine(out) + L-phenylalanine(in)</text>
        <dbReference type="Rhea" id="RHEA:71003"/>
        <dbReference type="ChEBI" id="CHEBI:57595"/>
        <dbReference type="ChEBI" id="CHEBI:58095"/>
    </reaction>
</comment>
<comment type="catalytic activity">
    <reaction evidence="7 10">
        <text>L-tryptophan(in) + L-phenylalanine(out) = L-tryptophan(out) + L-phenylalanine(in)</text>
        <dbReference type="Rhea" id="RHEA:71007"/>
        <dbReference type="ChEBI" id="CHEBI:57912"/>
        <dbReference type="ChEBI" id="CHEBI:58095"/>
    </reaction>
</comment>
<comment type="catalytic activity">
    <reaction evidence="7">
        <text>L-isoleucine(in) + L-phenylalanine(out) = L-isoleucine(out) + L-phenylalanine(in)</text>
        <dbReference type="Rhea" id="RHEA:71011"/>
        <dbReference type="ChEBI" id="CHEBI:58045"/>
        <dbReference type="ChEBI" id="CHEBI:58095"/>
    </reaction>
</comment>
<comment type="catalytic activity">
    <reaction evidence="7">
        <text>L-valine(in) + L-phenylalanine(out) = L-valine(out) + L-phenylalanine(in)</text>
        <dbReference type="Rhea" id="RHEA:71019"/>
        <dbReference type="ChEBI" id="CHEBI:57762"/>
        <dbReference type="ChEBI" id="CHEBI:58095"/>
    </reaction>
</comment>
<comment type="catalytic activity">
    <reaction evidence="7 10">
        <text>L-leucine(in) + L-phenylalanine(out) = L-leucine(out) + L-phenylalanine(in)</text>
        <dbReference type="Rhea" id="RHEA:71023"/>
        <dbReference type="ChEBI" id="CHEBI:57427"/>
        <dbReference type="ChEBI" id="CHEBI:58095"/>
    </reaction>
</comment>
<comment type="catalytic activity">
    <reaction evidence="7">
        <text>L-glutamine(in) + L-phenylalanine(out) = L-glutamine(out) + L-phenylalanine(in)</text>
        <dbReference type="Rhea" id="RHEA:71027"/>
        <dbReference type="ChEBI" id="CHEBI:58095"/>
        <dbReference type="ChEBI" id="CHEBI:58359"/>
    </reaction>
</comment>
<comment type="catalytic activity">
    <reaction evidence="7">
        <text>L-cysteine(in) + L-phenylalanine(out) = L-cysteine(out) + L-phenylalanine(in)</text>
        <dbReference type="Rhea" id="RHEA:71031"/>
        <dbReference type="ChEBI" id="CHEBI:35235"/>
        <dbReference type="ChEBI" id="CHEBI:58095"/>
    </reaction>
</comment>
<comment type="catalytic activity">
    <reaction evidence="7 8">
        <text>L-phenylalanine(out) + L-methionine(in) = L-phenylalanine(in) + L-methionine(out)</text>
        <dbReference type="Rhea" id="RHEA:71039"/>
        <dbReference type="ChEBI" id="CHEBI:57844"/>
        <dbReference type="ChEBI" id="CHEBI:58095"/>
    </reaction>
</comment>
<comment type="catalytic activity">
    <reaction evidence="8">
        <text>L-leucine(out) + L-methionine(in) = L-leucine(in) + L-methionine(out)</text>
        <dbReference type="Rhea" id="RHEA:71051"/>
        <dbReference type="ChEBI" id="CHEBI:57427"/>
        <dbReference type="ChEBI" id="CHEBI:57844"/>
    </reaction>
</comment>
<comment type="catalytic activity">
    <reaction evidence="8">
        <text>L-cysteine(out) + L-methionine(in) = L-cysteine(in) + L-methionine(out)</text>
        <dbReference type="Rhea" id="RHEA:71055"/>
        <dbReference type="ChEBI" id="CHEBI:35235"/>
        <dbReference type="ChEBI" id="CHEBI:57844"/>
    </reaction>
</comment>
<comment type="catalytic activity">
    <reaction evidence="8">
        <text>S-methylmercury-L-cysteine(out) + L-methionine(in) = S-methylmercury-L-cysteine(in) + L-methionine(out)</text>
        <dbReference type="Rhea" id="RHEA:71103"/>
        <dbReference type="ChEBI" id="CHEBI:57844"/>
        <dbReference type="ChEBI" id="CHEBI:190186"/>
    </reaction>
</comment>
<comment type="catalytic activity">
    <reaction evidence="8">
        <text>S-methylmercury-L-cysteine(in) + L-leucine(out) = S-methylmercury-L-cysteine(out) + L-leucine(in)</text>
        <dbReference type="Rhea" id="RHEA:71107"/>
        <dbReference type="ChEBI" id="CHEBI:57427"/>
        <dbReference type="ChEBI" id="CHEBI:190186"/>
    </reaction>
</comment>
<comment type="catalytic activity">
    <reaction evidence="8">
        <text>S-methylmercury-L-cysteine(in) + L-phenylalanine(out) = S-methylmercury-L-cysteine(out) + L-phenylalanine(in)</text>
        <dbReference type="Rhea" id="RHEA:71111"/>
        <dbReference type="ChEBI" id="CHEBI:58095"/>
        <dbReference type="ChEBI" id="CHEBI:190186"/>
    </reaction>
</comment>
<comment type="catalytic activity">
    <reaction evidence="7">
        <text>L-phenylalanine(out) + L-serine(in) = L-phenylalanine(in) + L-serine(out)</text>
        <dbReference type="Rhea" id="RHEA:71035"/>
        <dbReference type="ChEBI" id="CHEBI:33384"/>
        <dbReference type="ChEBI" id="CHEBI:58095"/>
    </reaction>
</comment>
<comment type="catalytic activity">
    <reaction evidence="7">
        <text>L-phenylalanine(out) + glycine(in) = L-phenylalanine(in) + glycine(out)</text>
        <dbReference type="Rhea" id="RHEA:71047"/>
        <dbReference type="ChEBI" id="CHEBI:57305"/>
        <dbReference type="ChEBI" id="CHEBI:58095"/>
    </reaction>
</comment>
<comment type="catalytic activity">
    <reaction evidence="7">
        <text>L-phenylalanine(out) + L-alanine(in) = L-phenylalanine(in) + L-alanine(out)</text>
        <dbReference type="Rhea" id="RHEA:71043"/>
        <dbReference type="ChEBI" id="CHEBI:57972"/>
        <dbReference type="ChEBI" id="CHEBI:58095"/>
    </reaction>
</comment>
<comment type="catalytic activity">
    <reaction evidence="1">
        <text>3,3'-diiodo-L-thyronine(out) = 3,3'-diiodo-L-thyronine(in)</text>
        <dbReference type="Rhea" id="RHEA:71823"/>
        <dbReference type="ChEBI" id="CHEBI:176514"/>
    </reaction>
    <physiologicalReaction direction="left-to-right" evidence="1">
        <dbReference type="Rhea" id="RHEA:71824"/>
    </physiologicalReaction>
</comment>
<comment type="catalytic activity">
    <reaction evidence="1">
        <text>3,3',5-triiodo-L-thyronine(out) = 3,3',5-triiodo-L-thyronine(in)</text>
        <dbReference type="Rhea" id="RHEA:71811"/>
        <dbReference type="ChEBI" id="CHEBI:533015"/>
    </reaction>
    <physiologicalReaction direction="left-to-right" evidence="1">
        <dbReference type="Rhea" id="RHEA:71812"/>
    </physiologicalReaction>
</comment>
<comment type="catalytic activity">
    <reaction evidence="2">
        <text>L-dopa(out) + L-phenylalanine(in) = L-dopa(in) + L-phenylalanine(out)</text>
        <dbReference type="Rhea" id="RHEA:71439"/>
        <dbReference type="ChEBI" id="CHEBI:57504"/>
        <dbReference type="ChEBI" id="CHEBI:58095"/>
    </reaction>
</comment>
<comment type="activity regulation">
    <text evidence="10">Inhibited by the L-type inhibitor 2-Aminobicyclo-(2,2,1)-heptane-2-carboxylic acid (BCH).</text>
</comment>
<comment type="biophysicochemical properties">
    <kinetics>
        <KM evidence="7">36.5 uM for L-isoleucine (extracellular side)</KM>
        <KM evidence="7">7 mM for L-isoleucine (intracellular side)</KM>
        <KM evidence="7">167 uM for L-alanine (extracellular side)</KM>
        <KM evidence="7">275 mM for L-alanine (intracellular side)</KM>
        <KM evidence="7">4.2 mM for glycine (extracellular side)</KM>
        <KM evidence="7">2.6 mM for glycine (intracellular side)</KM>
        <KM evidence="17">110.3 uM for L-glutamine</KM>
        <KM evidence="8 12">221 uM for L-leucine</KM>
        <KM evidence="8 12">64 uM for MeHg-L-cysteine</KM>
        <KM evidence="4 8 10 12">161 uM for methionine</KM>
        <KM evidence="4">978 uM for L-alanine</KM>
        <KM evidence="17">134 uM for L-alanine</KM>
        <KM evidence="10">89.35 uM for L-phenylalanine</KM>
        <KM evidence="17">52.7 uM for L-tryptophan</KM>
        <KM evidence="8 12">57.3 uM for L-tryptophan</KM>
        <KM evidence="8 12">48.8 uM for L-tyrosine</KM>
        <Vmax evidence="17">6706.0 pmol/min/mg enzyme with L-glutamine as substrate</Vmax>
        <Vmax evidence="17">7376.0 pmol/min/mg enzyme with L-alanine as substrate</Vmax>
        <Vmax evidence="17">4122.0 pmol/min/mg enzyme with L-tryptophan as substrate</Vmax>
        <Vmax evidence="10">58.9 pmol/min/mg enzyme with L-phenylalanine as substrate</Vmax>
    </kinetics>
</comment>
<comment type="subunit">
    <text evidence="4 5 6 9 11 12 15 16 17">Disulfide-linked heterodimer composed of the catalytic light chain subunit SLC7A8 and the heavy chain subunit SLC3A2. SLC3A2 acts as chaperones for correct plasma membrane trafficking and stabilization of SLC7A8 and modulates the substrate affinity and specificity of SLC7A8 (PubMed:10391915, PubMed:10574970, PubMed:11311135, PubMed:15769744, PubMed:15918515, PubMed:33066406, PubMed:33298890, PubMed:34848541). ICAM-1 associates with the heterodimer SLC3A2/SLC7A8; this interaction regulates SLC7A8 activity (PubMed:12716892).</text>
</comment>
<comment type="interaction">
    <interactant intactId="EBI-13292283">
        <id>Q9UHI5</id>
    </interactant>
    <interactant intactId="EBI-348517">
        <id>O95870</id>
        <label>ABHD16A</label>
    </interactant>
    <organismsDiffer>false</organismsDiffer>
    <experiments>3</experiments>
</comment>
<comment type="interaction">
    <interactant intactId="EBI-13292283">
        <id>Q9UHI5</id>
    </interactant>
    <interactant intactId="EBI-1754287">
        <id>Q9NRZ5</id>
        <label>AGPAT4</label>
    </interactant>
    <organismsDiffer>false</organismsDiffer>
    <experiments>3</experiments>
</comment>
<comment type="interaction">
    <interactant intactId="EBI-13292283">
        <id>Q9UHI5</id>
    </interactant>
    <interactant intactId="EBI-13059134">
        <id>Q13520</id>
        <label>AQP6</label>
    </interactant>
    <organismsDiffer>false</organismsDiffer>
    <experiments>3</experiments>
</comment>
<comment type="interaction">
    <interactant intactId="EBI-13292283">
        <id>Q9UHI5</id>
    </interactant>
    <interactant intactId="EBI-372265">
        <id>P21964</id>
        <label>COMT</label>
    </interactant>
    <organismsDiffer>false</organismsDiffer>
    <experiments>3</experiments>
</comment>
<comment type="interaction">
    <interactant intactId="EBI-13292283">
        <id>Q9UHI5</id>
    </interactant>
    <interactant intactId="EBI-398977">
        <id>Q9BUN8</id>
        <label>DERL1</label>
    </interactant>
    <organismsDiffer>false</organismsDiffer>
    <experiments>3</experiments>
</comment>
<comment type="interaction">
    <interactant intactId="EBI-13292283">
        <id>Q9UHI5</id>
    </interactant>
    <interactant intactId="EBI-25852368">
        <id>O75460-2</id>
        <label>ERN1</label>
    </interactant>
    <organismsDiffer>false</organismsDiffer>
    <experiments>3</experiments>
</comment>
<comment type="interaction">
    <interactant intactId="EBI-13292283">
        <id>Q9UHI5</id>
    </interactant>
    <interactant intactId="EBI-348399">
        <id>P22607</id>
        <label>FGFR3</label>
    </interactant>
    <organismsDiffer>false</organismsDiffer>
    <experiments>3</experiments>
</comment>
<comment type="interaction">
    <interactant intactId="EBI-13292283">
        <id>Q9UHI5</id>
    </interactant>
    <interactant intactId="EBI-10226858">
        <id>Q0VDC6</id>
        <label>FKBP1A</label>
    </interactant>
    <organismsDiffer>false</organismsDiffer>
    <experiments>3</experiments>
</comment>
<comment type="interaction">
    <interactant intactId="EBI-13292283">
        <id>Q9UHI5</id>
    </interactant>
    <interactant intactId="EBI-351506">
        <id>P06396</id>
        <label>GSN</label>
    </interactant>
    <organismsDiffer>false</organismsDiffer>
    <experiments>3</experiments>
</comment>
<comment type="interaction">
    <interactant intactId="EBI-13292283">
        <id>Q9UHI5</id>
    </interactant>
    <interactant intactId="EBI-356991">
        <id>P54652</id>
        <label>HSPA2</label>
    </interactant>
    <organismsDiffer>false</organismsDiffer>
    <experiments>3</experiments>
</comment>
<comment type="interaction">
    <interactant intactId="EBI-13292283">
        <id>Q9UHI5</id>
    </interactant>
    <interactant intactId="EBI-354921">
        <id>P11021</id>
        <label>HSPA5</label>
    </interactant>
    <organismsDiffer>false</organismsDiffer>
    <experiments>3</experiments>
</comment>
<comment type="interaction">
    <interactant intactId="EBI-13292283">
        <id>Q9UHI5</id>
    </interactant>
    <interactant intactId="EBI-11956541">
        <id>Q9GZY8-5</id>
        <label>MFF</label>
    </interactant>
    <organismsDiffer>false</organismsDiffer>
    <experiments>3</experiments>
</comment>
<comment type="interaction">
    <interactant intactId="EBI-13292283">
        <id>Q9UHI5</id>
    </interactant>
    <interactant intactId="EBI-745345">
        <id>Q96ES6</id>
        <label>MFSD3</label>
    </interactant>
    <organismsDiffer>false</organismsDiffer>
    <experiments>3</experiments>
</comment>
<comment type="interaction">
    <interactant intactId="EBI-13292283">
        <id>Q9UHI5</id>
    </interactant>
    <interactant intactId="EBI-1246131">
        <id>O95167</id>
        <label>NDUFA3</label>
    </interactant>
    <organismsDiffer>false</organismsDiffer>
    <experiments>3</experiments>
</comment>
<comment type="interaction">
    <interactant intactId="EBI-13292283">
        <id>Q9UHI5</id>
    </interactant>
    <interactant intactId="EBI-10317425">
        <id>Q9NZG7</id>
        <label>NINJ2</label>
    </interactant>
    <organismsDiffer>false</organismsDiffer>
    <experiments>3</experiments>
</comment>
<comment type="interaction">
    <interactant intactId="EBI-13292283">
        <id>Q9UHI5</id>
    </interactant>
    <interactant intactId="EBI-7545592">
        <id>Q9H6H4</id>
        <label>REEP4</label>
    </interactant>
    <organismsDiffer>false</organismsDiffer>
    <experiments>3</experiments>
</comment>
<comment type="interaction">
    <interactant intactId="EBI-13292283">
        <id>Q9UHI5</id>
    </interactant>
    <interactant intactId="EBI-750381">
        <id>O15389</id>
        <label>SIGLEC5</label>
    </interactant>
    <organismsDiffer>false</organismsDiffer>
    <experiments>3</experiments>
</comment>
<comment type="interaction">
    <interactant intactId="EBI-13292283">
        <id>Q9UHI5</id>
    </interactant>
    <interactant intactId="EBI-10281975">
        <id>Q96AG3</id>
        <label>SLC25A46</label>
    </interactant>
    <organismsDiffer>false</organismsDiffer>
    <experiments>3</experiments>
</comment>
<comment type="interaction">
    <interactant intactId="EBI-13292283">
        <id>Q9UHI5</id>
    </interactant>
    <interactant intactId="EBI-8644112">
        <id>Q9BRI3</id>
        <label>SLC30A2</label>
    </interactant>
    <organismsDiffer>false</organismsDiffer>
    <experiments>3</experiments>
</comment>
<comment type="interaction">
    <interactant intactId="EBI-13292283">
        <id>Q9UHI5</id>
    </interactant>
    <interactant intactId="EBI-12832276">
        <id>P08195-4</id>
        <label>SLC3A2</label>
    </interactant>
    <organismsDiffer>false</organismsDiffer>
    <experiments>3</experiments>
</comment>
<comment type="interaction">
    <interactant intactId="EBI-13292283">
        <id>Q9UHI5</id>
    </interactant>
    <interactant intactId="EBI-12828299">
        <id>O60906</id>
        <label>SMPD2</label>
    </interactant>
    <organismsDiffer>false</organismsDiffer>
    <experiments>3</experiments>
</comment>
<comment type="interaction">
    <interactant intactId="EBI-13292283">
        <id>Q9UHI5</id>
    </interactant>
    <interactant intactId="EBI-11957067">
        <id>Q6UX34</id>
        <label>SNORC</label>
    </interactant>
    <organismsDiffer>false</organismsDiffer>
    <experiments>3</experiments>
</comment>
<comment type="interaction">
    <interactant intactId="EBI-13292283">
        <id>Q9UHI5</id>
    </interactant>
    <interactant intactId="EBI-1049004">
        <id>P57105</id>
        <label>SYNJ2BP</label>
    </interactant>
    <organismsDiffer>false</organismsDiffer>
    <experiments>3</experiments>
</comment>
<comment type="interaction">
    <interactant intactId="EBI-13292283">
        <id>Q9UHI5</id>
    </interactant>
    <interactant intactId="EBI-8638294">
        <id>Q9NUH8</id>
        <label>TMEM14B</label>
    </interactant>
    <organismsDiffer>false</organismsDiffer>
    <experiments>3</experiments>
</comment>
<comment type="interaction">
    <interactant intactId="EBI-13292283">
        <id>Q9UHI5</id>
    </interactant>
    <interactant intactId="EBI-12876824">
        <id>Q9BTX3</id>
        <label>TMEM208</label>
    </interactant>
    <organismsDiffer>false</organismsDiffer>
    <experiments>3</experiments>
</comment>
<comment type="interaction">
    <interactant intactId="EBI-13292283">
        <id>Q9UHI5</id>
    </interactant>
    <interactant intactId="EBI-2852148">
        <id>Q9H2L4</id>
        <label>TMEM60</label>
    </interactant>
    <organismsDiffer>false</organismsDiffer>
    <experiments>3</experiments>
</comment>
<comment type="interaction">
    <interactant intactId="EBI-13292283">
        <id>Q9UHI5</id>
    </interactant>
    <interactant intactId="EBI-6656213">
        <id>Q6PI78</id>
        <label>TMEM65</label>
    </interactant>
    <organismsDiffer>false</organismsDiffer>
    <experiments>3</experiments>
</comment>
<comment type="interaction">
    <interactant intactId="EBI-13292283">
        <id>Q9UHI5</id>
    </interactant>
    <interactant intactId="EBI-7850136">
        <id>Q9Y548</id>
        <label>YIPF1</label>
    </interactant>
    <organismsDiffer>false</organismsDiffer>
    <experiments>3</experiments>
</comment>
<comment type="interaction">
    <interactant intactId="EBI-13292283">
        <id>Q9UHI5</id>
    </interactant>
    <interactant intactId="EBI-751210">
        <id>Q96EC8</id>
        <label>YIPF6</label>
    </interactant>
    <organismsDiffer>false</organismsDiffer>
    <experiments>3</experiments>
</comment>
<comment type="subcellular location">
    <subcellularLocation>
        <location evidence="14 17">Cell membrane</location>
        <topology evidence="16 17">Multi-pass membrane protein</topology>
    </subcellularLocation>
    <subcellularLocation>
        <location evidence="4 5 12">Basolateral cell membrane</location>
        <topology evidence="16 17">Multi-pass membrane protein</topology>
    </subcellularLocation>
    <text evidence="5">Localized to the cytoplasm when expressed alone but when coexpressed with SLC3A2/4F2hc, is localized to the plasma membrane. Colocalized with SLC3A2/4F2hc at the basolateral membrane of kidney cortex proximal tubules and small intestine epithelia of the villi.</text>
</comment>
<comment type="alternative products">
    <event type="alternative splicing"/>
    <isoform>
        <id>Q9UHI5-1</id>
        <name>1</name>
        <sequence type="displayed"/>
    </isoform>
    <isoform>
        <id>Q9UHI5-2</id>
        <name>2</name>
        <sequence type="described" ref="VSP_046946"/>
    </isoform>
    <isoform>
        <id>Q9UHI5-3</id>
        <name>3</name>
        <sequence type="described" ref="VSP_046945"/>
    </isoform>
    <isoform>
        <id>Q9UHI5-4</id>
        <name>4</name>
        <sequence type="described" ref="VSP_046947"/>
    </isoform>
</comment>
<comment type="tissue specificity">
    <text evidence="4 10 12 13">Strongest expression is observed in kidney and moderate expression in placenta and brain, followed by liver, prostate, testis, ovary, lymph node, thymus, spleen, skeletal muscle and heart. Also expressed in fetal liver as well as in the retinal pigment epithelial cell line ARPE-19 and the intestinal epithelial cell line Caco-2.</text>
</comment>
<comment type="similarity">
    <text evidence="21">Belongs to the amino acid-polyamine-organocation (APC) superfamily. L-type amino acid transporter (LAT) (TC 2.A.3.8) family.</text>
</comment>
<comment type="sequence caution" evidence="21">
    <conflict type="erroneous initiation">
        <sequence resource="EMBL-CDS" id="CAD62616"/>
    </conflict>
    <text>Extended N-terminus.</text>
</comment>
<sequence>MEEGARHRNNTEKKHPGGGESDASPEAGSGGGGVALKKEIGLVSACGIIVGNIIGSGIFVSPKGVLENAGSVGLALIVWIVTGFITVVGALCYAELGVTIPKSGGDYSYVKDIFGGLAGFLRLWIAVLVIYPTNQAVIALTFSNYVLQPLFPTCFPPESGLRLLAAICLLLLTWVNCSSVRWATRVQDIFTAGKLLALALIIIMGIVQICKGEYFWLEPKNAFENFQEPDIGLVALAFLQGSFAYGGWNFLNYVTEELVDPYKNLPRAIFISIPLVTFVYVFANVAYVTAMSPQELLASNAVAVTFGEKLLGVMAWIMPISVALSTFGGVNGSLFTSSRLFFAGAREGHLPSVLAMIHVKRCTPIPALLFTCISTLLMLVTSDMYTLINYVGFINYLFYGVTVAGQIVLRWKKPDIPRPIKINLLFPIIYLLFWAFLLVFSLWSEPVVCGIGLAIMLTGVPVYFLGVYWQHKPKCFSDFIELLTLVSQKMCVVVYPEVERGSGTEEANEDMEEQQQPMYQPTPTKDKDVAGQPQP</sequence>
<protein>
    <recommendedName>
        <fullName>Large neutral amino acids transporter small subunit 2</fullName>
    </recommendedName>
    <alternativeName>
        <fullName>L-type amino acid transporter 2</fullName>
        <shortName>hLAT2</shortName>
    </alternativeName>
    <alternativeName>
        <fullName>Solute carrier family 7 member 8</fullName>
    </alternativeName>
</protein>
<accession>Q9UHI5</accession>
<accession>B2R8Q4</accession>
<accession>B4DKT4</accession>
<accession>B4DTV6</accession>
<accession>D3DS46</accession>
<accession>F2Z2J4</accession>
<accession>Q86U05</accession>
<accession>Q9UKQ6</accession>
<accession>Q9UKQ7</accession>
<accession>Q9UKQ8</accession>
<accession>Q9Y445</accession>
<gene>
    <name evidence="22" type="primary">SLC7A8</name>
    <name evidence="18" type="synonym">LAT2</name>
</gene>
<reference key="1">
    <citation type="journal article" date="1999" name="J. Biol. Chem.">
        <title>Identification of a membrane protein, LAT-2, that co-expresses with 4F2 heavy chain, an L-type amino acid transport activity with broad specificity for small and large zwitterionic amino acids.</title>
        <authorList>
            <person name="Pineda M."/>
            <person name="Fernandez E."/>
            <person name="Torrents D."/>
            <person name="Estevez R."/>
            <person name="Lopez C."/>
            <person name="Camps M."/>
            <person name="Lloberas J."/>
            <person name="Zorzano A."/>
            <person name="Palacin M."/>
        </authorList>
    </citation>
    <scope>NUCLEOTIDE SEQUENCE [MRNA] (ISOFORM 1)</scope>
    <scope>FUNCTION</scope>
    <scope>TRANSPORTER ACTIVITY</scope>
    <scope>BIOPHYSICOCHEMICAL PROPERTIES</scope>
    <scope>SUBUNIT</scope>
    <scope>SUBCELLULAR LOCATION</scope>
    <scope>TISSUE SPECIFICITY</scope>
</reference>
<reference key="2">
    <citation type="journal article" date="1999" name="J. Biol. Chem.">
        <title>LAT2, a new basolateral 4F2hc/CD98-associated amino acid transporter of kidney and intestine.</title>
        <authorList>
            <person name="Rossier G."/>
            <person name="Meier C."/>
            <person name="Bauch C."/>
            <person name="Summa V."/>
            <person name="Sordat B."/>
            <person name="Verrey F."/>
            <person name="Kuehn L.C."/>
        </authorList>
    </citation>
    <scope>NUCLEOTIDE SEQUENCE [MRNA] (ISOFORM 1)</scope>
    <scope>SUBUNIT</scope>
    <scope>SUBCELLULAR LOCATION</scope>
    <source>
        <tissue>Melanocyte</tissue>
    </source>
</reference>
<reference key="3">
    <citation type="journal article" date="1999" name="Nat. Genet.">
        <title>SLC7A7, encoding a putative permease-related protein, is mutated in patients with lysinuric protein intolerance.</title>
        <authorList>
            <person name="Borsani G."/>
            <person name="Bassi M.T."/>
            <person name="Sperandeo M.P."/>
            <person name="De Grandi A."/>
            <person name="Buoninconti A."/>
            <person name="Riboni M."/>
            <person name="Manzoni M."/>
            <person name="Incerti B."/>
            <person name="Pepe A."/>
            <person name="Andria G."/>
            <person name="Ballabio A."/>
            <person name="Sebastio G."/>
        </authorList>
    </citation>
    <scope>NUCLEOTIDE SEQUENCE [MRNA] (ISOFORM 1)</scope>
    <source>
        <tissue>Placenta</tissue>
    </source>
</reference>
<reference key="4">
    <citation type="journal article" date="2005" name="Arch. Pharm. Res.">
        <title>Reabsorption of neutral amino acids mediated by amino acid transporter LAT2 and TAT1 in the basolateral membrane of proximal tubule.</title>
        <authorList>
            <person name="Park S.Y."/>
            <person name="Kim J.-K."/>
            <person name="Kim I.J."/>
            <person name="Choi B.K."/>
            <person name="Jung K.Y."/>
            <person name="Lee S."/>
            <person name="Park K.J."/>
            <person name="Chairoungdua A."/>
            <person name="Kanai Y."/>
            <person name="Endou H."/>
            <person name="Kim D.K."/>
        </authorList>
    </citation>
    <scope>NUCLEOTIDE SEQUENCE [MRNA] (ISOFORM 1)</scope>
    <scope>FUNCTION</scope>
    <scope>TRANSPORTER ACTIVITY</scope>
    <scope>BIOPHYSICOCHEMICAL PROPERTIES</scope>
    <scope>SUBUNIT</scope>
    <scope>SUBCELLULAR LOCATION</scope>
    <scope>TISSUE SPECIFICITY</scope>
    <source>
        <tissue>Kidney</tissue>
    </source>
</reference>
<reference key="5">
    <citation type="submission" date="2003-02" db="EMBL/GenBank/DDBJ databases">
        <title>Full-length cDNA libraries and normalization.</title>
        <authorList>
            <person name="Li W.B."/>
            <person name="Gruber C."/>
            <person name="Jessee J."/>
            <person name="Polayes D."/>
        </authorList>
    </citation>
    <scope>NUCLEOTIDE SEQUENCE [LARGE SCALE MRNA] (ISOFORM 2)</scope>
    <source>
        <tissue>Placenta</tissue>
    </source>
</reference>
<reference key="6">
    <citation type="journal article" date="2004" name="Nat. Genet.">
        <title>Complete sequencing and characterization of 21,243 full-length human cDNAs.</title>
        <authorList>
            <person name="Ota T."/>
            <person name="Suzuki Y."/>
            <person name="Nishikawa T."/>
            <person name="Otsuki T."/>
            <person name="Sugiyama T."/>
            <person name="Irie R."/>
            <person name="Wakamatsu A."/>
            <person name="Hayashi K."/>
            <person name="Sato H."/>
            <person name="Nagai K."/>
            <person name="Kimura K."/>
            <person name="Makita H."/>
            <person name="Sekine M."/>
            <person name="Obayashi M."/>
            <person name="Nishi T."/>
            <person name="Shibahara T."/>
            <person name="Tanaka T."/>
            <person name="Ishii S."/>
            <person name="Yamamoto J."/>
            <person name="Saito K."/>
            <person name="Kawai Y."/>
            <person name="Isono Y."/>
            <person name="Nakamura Y."/>
            <person name="Nagahari K."/>
            <person name="Murakami K."/>
            <person name="Yasuda T."/>
            <person name="Iwayanagi T."/>
            <person name="Wagatsuma M."/>
            <person name="Shiratori A."/>
            <person name="Sudo H."/>
            <person name="Hosoiri T."/>
            <person name="Kaku Y."/>
            <person name="Kodaira H."/>
            <person name="Kondo H."/>
            <person name="Sugawara M."/>
            <person name="Takahashi M."/>
            <person name="Kanda K."/>
            <person name="Yokoi T."/>
            <person name="Furuya T."/>
            <person name="Kikkawa E."/>
            <person name="Omura Y."/>
            <person name="Abe K."/>
            <person name="Kamihara K."/>
            <person name="Katsuta N."/>
            <person name="Sato K."/>
            <person name="Tanikawa M."/>
            <person name="Yamazaki M."/>
            <person name="Ninomiya K."/>
            <person name="Ishibashi T."/>
            <person name="Yamashita H."/>
            <person name="Murakawa K."/>
            <person name="Fujimori K."/>
            <person name="Tanai H."/>
            <person name="Kimata M."/>
            <person name="Watanabe M."/>
            <person name="Hiraoka S."/>
            <person name="Chiba Y."/>
            <person name="Ishida S."/>
            <person name="Ono Y."/>
            <person name="Takiguchi S."/>
            <person name="Watanabe S."/>
            <person name="Yosida M."/>
            <person name="Hotuta T."/>
            <person name="Kusano J."/>
            <person name="Kanehori K."/>
            <person name="Takahashi-Fujii A."/>
            <person name="Hara H."/>
            <person name="Tanase T.-O."/>
            <person name="Nomura Y."/>
            <person name="Togiya S."/>
            <person name="Komai F."/>
            <person name="Hara R."/>
            <person name="Takeuchi K."/>
            <person name="Arita M."/>
            <person name="Imose N."/>
            <person name="Musashino K."/>
            <person name="Yuuki H."/>
            <person name="Oshima A."/>
            <person name="Sasaki N."/>
            <person name="Aotsuka S."/>
            <person name="Yoshikawa Y."/>
            <person name="Matsunawa H."/>
            <person name="Ichihara T."/>
            <person name="Shiohata N."/>
            <person name="Sano S."/>
            <person name="Moriya S."/>
            <person name="Momiyama H."/>
            <person name="Satoh N."/>
            <person name="Takami S."/>
            <person name="Terashima Y."/>
            <person name="Suzuki O."/>
            <person name="Nakagawa S."/>
            <person name="Senoh A."/>
            <person name="Mizoguchi H."/>
            <person name="Goto Y."/>
            <person name="Shimizu F."/>
            <person name="Wakebe H."/>
            <person name="Hishigaki H."/>
            <person name="Watanabe T."/>
            <person name="Sugiyama A."/>
            <person name="Takemoto M."/>
            <person name="Kawakami B."/>
            <person name="Yamazaki M."/>
            <person name="Watanabe K."/>
            <person name="Kumagai A."/>
            <person name="Itakura S."/>
            <person name="Fukuzumi Y."/>
            <person name="Fujimori Y."/>
            <person name="Komiyama M."/>
            <person name="Tashiro H."/>
            <person name="Tanigami A."/>
            <person name="Fujiwara T."/>
            <person name="Ono T."/>
            <person name="Yamada K."/>
            <person name="Fujii Y."/>
            <person name="Ozaki K."/>
            <person name="Hirao M."/>
            <person name="Ohmori Y."/>
            <person name="Kawabata A."/>
            <person name="Hikiji T."/>
            <person name="Kobatake N."/>
            <person name="Inagaki H."/>
            <person name="Ikema Y."/>
            <person name="Okamoto S."/>
            <person name="Okitani R."/>
            <person name="Kawakami T."/>
            <person name="Noguchi S."/>
            <person name="Itoh T."/>
            <person name="Shigeta K."/>
            <person name="Senba T."/>
            <person name="Matsumura K."/>
            <person name="Nakajima Y."/>
            <person name="Mizuno T."/>
            <person name="Morinaga M."/>
            <person name="Sasaki M."/>
            <person name="Togashi T."/>
            <person name="Oyama M."/>
            <person name="Hata H."/>
            <person name="Watanabe M."/>
            <person name="Komatsu T."/>
            <person name="Mizushima-Sugano J."/>
            <person name="Satoh T."/>
            <person name="Shirai Y."/>
            <person name="Takahashi Y."/>
            <person name="Nakagawa K."/>
            <person name="Okumura K."/>
            <person name="Nagase T."/>
            <person name="Nomura N."/>
            <person name="Kikuchi H."/>
            <person name="Masuho Y."/>
            <person name="Yamashita R."/>
            <person name="Nakai K."/>
            <person name="Yada T."/>
            <person name="Nakamura Y."/>
            <person name="Ohara O."/>
            <person name="Isogai T."/>
            <person name="Sugano S."/>
        </authorList>
    </citation>
    <scope>NUCLEOTIDE SEQUENCE [LARGE SCALE MRNA] (ISOFORMS 1; 3 AND 4)</scope>
    <source>
        <tissue>Hippocampus</tissue>
        <tissue>Placenta</tissue>
        <tissue>Tongue</tissue>
    </source>
</reference>
<reference key="7">
    <citation type="journal article" date="2003" name="Nature">
        <title>The DNA sequence and analysis of human chromosome 14.</title>
        <authorList>
            <person name="Heilig R."/>
            <person name="Eckenberg R."/>
            <person name="Petit J.-L."/>
            <person name="Fonknechten N."/>
            <person name="Da Silva C."/>
            <person name="Cattolico L."/>
            <person name="Levy M."/>
            <person name="Barbe V."/>
            <person name="De Berardinis V."/>
            <person name="Ureta-Vidal A."/>
            <person name="Pelletier E."/>
            <person name="Vico V."/>
            <person name="Anthouard V."/>
            <person name="Rowen L."/>
            <person name="Madan A."/>
            <person name="Qin S."/>
            <person name="Sun H."/>
            <person name="Du H."/>
            <person name="Pepin K."/>
            <person name="Artiguenave F."/>
            <person name="Robert C."/>
            <person name="Cruaud C."/>
            <person name="Bruels T."/>
            <person name="Jaillon O."/>
            <person name="Friedlander L."/>
            <person name="Samson G."/>
            <person name="Brottier P."/>
            <person name="Cure S."/>
            <person name="Segurens B."/>
            <person name="Aniere F."/>
            <person name="Samain S."/>
            <person name="Crespeau H."/>
            <person name="Abbasi N."/>
            <person name="Aiach N."/>
            <person name="Boscus D."/>
            <person name="Dickhoff R."/>
            <person name="Dors M."/>
            <person name="Dubois I."/>
            <person name="Friedman C."/>
            <person name="Gouyvenoux M."/>
            <person name="James R."/>
            <person name="Madan A."/>
            <person name="Mairey-Estrada B."/>
            <person name="Mangenot S."/>
            <person name="Martins N."/>
            <person name="Menard M."/>
            <person name="Oztas S."/>
            <person name="Ratcliffe A."/>
            <person name="Shaffer T."/>
            <person name="Trask B."/>
            <person name="Vacherie B."/>
            <person name="Bellemere C."/>
            <person name="Belser C."/>
            <person name="Besnard-Gonnet M."/>
            <person name="Bartol-Mavel D."/>
            <person name="Boutard M."/>
            <person name="Briez-Silla S."/>
            <person name="Combette S."/>
            <person name="Dufosse-Laurent V."/>
            <person name="Ferron C."/>
            <person name="Lechaplais C."/>
            <person name="Louesse C."/>
            <person name="Muselet D."/>
            <person name="Magdelenat G."/>
            <person name="Pateau E."/>
            <person name="Petit E."/>
            <person name="Sirvain-Trukniewicz P."/>
            <person name="Trybou A."/>
            <person name="Vega-Czarny N."/>
            <person name="Bataille E."/>
            <person name="Bluet E."/>
            <person name="Bordelais I."/>
            <person name="Dubois M."/>
            <person name="Dumont C."/>
            <person name="Guerin T."/>
            <person name="Haffray S."/>
            <person name="Hammadi R."/>
            <person name="Muanga J."/>
            <person name="Pellouin V."/>
            <person name="Robert D."/>
            <person name="Wunderle E."/>
            <person name="Gauguet G."/>
            <person name="Roy A."/>
            <person name="Sainte-Marthe L."/>
            <person name="Verdier J."/>
            <person name="Verdier-Discala C."/>
            <person name="Hillier L.W."/>
            <person name="Fulton L."/>
            <person name="McPherson J."/>
            <person name="Matsuda F."/>
            <person name="Wilson R."/>
            <person name="Scarpelli C."/>
            <person name="Gyapay G."/>
            <person name="Wincker P."/>
            <person name="Saurin W."/>
            <person name="Quetier F."/>
            <person name="Waterston R."/>
            <person name="Hood L."/>
            <person name="Weissenbach J."/>
        </authorList>
    </citation>
    <scope>NUCLEOTIDE SEQUENCE [LARGE SCALE GENOMIC DNA]</scope>
</reference>
<reference key="8">
    <citation type="submission" date="2005-09" db="EMBL/GenBank/DDBJ databases">
        <authorList>
            <person name="Mural R.J."/>
            <person name="Istrail S."/>
            <person name="Sutton G.G."/>
            <person name="Florea L."/>
            <person name="Halpern A.L."/>
            <person name="Mobarry C.M."/>
            <person name="Lippert R."/>
            <person name="Walenz B."/>
            <person name="Shatkay H."/>
            <person name="Dew I."/>
            <person name="Miller J.R."/>
            <person name="Flanigan M.J."/>
            <person name="Edwards N.J."/>
            <person name="Bolanos R."/>
            <person name="Fasulo D."/>
            <person name="Halldorsson B.V."/>
            <person name="Hannenhalli S."/>
            <person name="Turner R."/>
            <person name="Yooseph S."/>
            <person name="Lu F."/>
            <person name="Nusskern D.R."/>
            <person name="Shue B.C."/>
            <person name="Zheng X.H."/>
            <person name="Zhong F."/>
            <person name="Delcher A.L."/>
            <person name="Huson D.H."/>
            <person name="Kravitz S.A."/>
            <person name="Mouchard L."/>
            <person name="Reinert K."/>
            <person name="Remington K.A."/>
            <person name="Clark A.G."/>
            <person name="Waterman M.S."/>
            <person name="Eichler E.E."/>
            <person name="Adams M.D."/>
            <person name="Hunkapiller M.W."/>
            <person name="Myers E.W."/>
            <person name="Venter J.C."/>
        </authorList>
    </citation>
    <scope>NUCLEOTIDE SEQUENCE [LARGE SCALE GENOMIC DNA]</scope>
</reference>
<reference key="9">
    <citation type="journal article" date="2004" name="Genome Res.">
        <title>The status, quality, and expansion of the NIH full-length cDNA project: the Mammalian Gene Collection (MGC).</title>
        <authorList>
            <consortium name="The MGC Project Team"/>
        </authorList>
    </citation>
    <scope>NUCLEOTIDE SEQUENCE [LARGE SCALE MRNA] (ISOFORM 1)</scope>
    <source>
        <tissue>Skin</tissue>
    </source>
</reference>
<reference key="10">
    <citation type="journal article" date="2001" name="Biochem. J.">
        <title>Association of 4F2hc with light chains LAT1, LAT2 or y+LAT2 requires different domains.</title>
        <authorList>
            <person name="Broeer A."/>
            <person name="Friedrich B."/>
            <person name="Wagner C.A."/>
            <person name="Fillon S."/>
            <person name="Ganapathy V."/>
            <person name="Lang F."/>
            <person name="Broeer S."/>
        </authorList>
    </citation>
    <scope>FUNCTION</scope>
    <scope>SUBUNIT</scope>
</reference>
<reference key="11">
    <citation type="journal article" date="2002" name="Biochem. J.">
        <title>Transport of a neurotoxicant by molecular mimicry: the methylmercury-L-cysteine complex is a substrate for human L-type large neutral amino acid transporter (LAT) 1 and LAT2.</title>
        <authorList>
            <person name="Simmons-Willis T.A."/>
            <person name="Koh A.S."/>
            <person name="Clarkson T.W."/>
            <person name="Ballatori N."/>
        </authorList>
    </citation>
    <scope>FUNCTION</scope>
    <scope>TRANSPORTER ACTIVITY</scope>
    <scope>BIOPHYSICOCHEMICAL PROPERTIES</scope>
</reference>
<reference key="12">
    <citation type="journal article" date="2002" name="EMBO J.">
        <title>Activation of system L heterodimeric amino acid exchangers by intracellular substrates.</title>
        <authorList>
            <person name="Meier C."/>
            <person name="Ristic Z."/>
            <person name="Klauser S."/>
            <person name="Verrey F."/>
        </authorList>
    </citation>
    <scope>FUNCTION</scope>
    <scope>TRANSPORTER ACTIVITY</scope>
    <scope>BIOPHYSICOCHEMICAL PROPERTIES</scope>
</reference>
<reference key="13">
    <citation type="journal article" date="2003" name="J. Biol. Chem.">
        <title>CD98 and intracellular adhesion molecule I regulate the activity of amino acid transporter LAT-2 in polarized intestinal epithelia.</title>
        <authorList>
            <person name="Liu X."/>
            <person name="Charrier L."/>
            <person name="Gewirtz A."/>
            <person name="Sitaraman S."/>
            <person name="Merlin D."/>
        </authorList>
    </citation>
    <scope>FUNCTION</scope>
    <scope>SUBUNIT</scope>
    <scope>ACTIVITY REGULATION</scope>
</reference>
<reference key="14">
    <citation type="journal article" date="2004" name="Int. J. Pharm.">
        <title>Identification and functional characterization of a Na(+)-independent large neutral amino acid transporter (LAT2) on ARPE-19 cells.</title>
        <authorList>
            <person name="Gandhi M.D."/>
            <person name="Pal D."/>
            <person name="Mitra A.K."/>
        </authorList>
    </citation>
    <scope>FUNCTION</scope>
    <scope>TRANSPORTER ACTIVITY</scope>
    <scope>BIOPHYSICOCHEMICAL PROPERTIES</scope>
    <scope>TISSUE SPECIFICITY</scope>
    <scope>ACTIVITY REGULATION</scope>
</reference>
<reference key="15">
    <citation type="journal article" date="2005" name="Amino Acids">
        <title>Expression of LAT1 and LAT2 amino acid transporters in human and rat intestinal epithelial cells.</title>
        <authorList>
            <person name="Fraga S."/>
            <person name="Pinho M.J."/>
            <person name="Soares-da-Silva P."/>
        </authorList>
    </citation>
    <scope>SUBCELLULAR LOCATION</scope>
    <scope>TISSUE SPECIFICITY</scope>
</reference>
<reference key="16">
    <citation type="journal article" date="2005" name="J. Biol. Chem.">
        <title>Identification of stereoselective transporters for S-nitroso-L-cysteine: role of LAT1 and LAT2 in biological activity of S-nitrosothiols.</title>
        <authorList>
            <person name="Li S."/>
            <person name="Whorton A.R."/>
        </authorList>
    </citation>
    <scope>FUNCTION</scope>
    <scope>TRANSPORTER ACTIVITY</scope>
    <scope>SUBUNIT</scope>
</reference>
<reference key="17">
    <citation type="journal article" date="2018" name="Elife">
        <title>Mutations in L-type amino acid transporter-2 support SLC7A8 as a novel gene involved in age-related hearing loss.</title>
        <authorList>
            <person name="Espino Guarch M."/>
            <person name="Font-Llitjos M."/>
            <person name="Murillo-Cuesta S."/>
            <person name="Errasti-Murugarren E."/>
            <person name="Celaya A.M."/>
            <person name="Girotto G."/>
            <person name="Vuckovic D."/>
            <person name="Mezzavilla M."/>
            <person name="Vilches C."/>
            <person name="Bodoy S."/>
            <person name="Sahun I."/>
            <person name="Gonzalez L."/>
            <person name="Prat E."/>
            <person name="Zorzano A."/>
            <person name="Dierssen M."/>
            <person name="Varela-Nieto I."/>
            <person name="Gasparini P."/>
            <person name="Palacin M."/>
            <person name="Nunes V."/>
        </authorList>
    </citation>
    <scope>FUNCTION</scope>
    <scope>TRANSPORTER ACTIVITY</scope>
    <scope>SUBCELLULAR LOCATION</scope>
    <scope>VARIANTS ILE-302; MET-402; CYS-418 AND GLU-460</scope>
    <scope>CHARACTERIZATION OF VARIANTS ILE-302; MET-402; CYS-418 AND GLU-460</scope>
</reference>
<reference key="18">
    <citation type="journal article" date="2020" name="Int. J. Mol. Sci.">
        <title>The Heavy Chain 4F2hc Modulates the Substrate Affinity and Specificity of the Light Chains LAT1 and LAT2.</title>
        <authorList>
            <person name="Kantipudi S."/>
            <person name="Jeckelmann J.M."/>
            <person name="Ucurum Z."/>
            <person name="Bosshart P.D."/>
            <person name="Fotiadis D."/>
        </authorList>
    </citation>
    <scope>SUBUNIT</scope>
    <scope>FUNCTION</scope>
    <scope>TRANSPORTER ACTIVITY</scope>
</reference>
<reference evidence="24 25" key="19">
    <citation type="journal article" date="2020" name="Cell Discov.">
        <title>Structural insight into the substrate recognition and transport mechanism of the human LAT2-4F2hc complex.</title>
        <authorList>
            <person name="Yan R."/>
            <person name="Zhou J."/>
            <person name="Li Y."/>
            <person name="Lei J."/>
            <person name="Zhou Q."/>
        </authorList>
    </citation>
    <scope>STRUCTURE BY ELECTRON MICROSCOPY (2.90 ANGSTROMS) OF 2-535 IN COMPLEX WITH SLC3A2; L-TRYPTOPHAN AND L-LEUCINE</scope>
    <scope>FUNCTION</scope>
    <scope>TRANSPORTER ACTIVITY</scope>
    <scope>MUTAGENESIS OF ASN-134; PHE-243; ASN-395 AND TYR-396</scope>
    <scope>DISULFIDE BOND</scope>
    <scope>SUBCELLULAR LOCATION</scope>
</reference>
<reference evidence="23" key="20">
    <citation type="journal article" date="2021" name="Proc. Natl. Acad. Sci. U.S.A.">
        <title>Structural basis for substrate specificity of heteromeric transporters of neutral amino acids.</title>
        <authorList>
            <person name="Rodriguez C.F."/>
            <person name="Escudero-Bravo P."/>
            <person name="Diaz L."/>
            <person name="Bartoccioni P."/>
            <person name="Garcia-Martin C."/>
            <person name="Gilabert J.G."/>
            <person name="Boskovic J."/>
            <person name="Guallar V."/>
            <person name="Errasti-Murugarren E."/>
            <person name="Llorca O."/>
            <person name="Palacin M."/>
        </authorList>
    </citation>
    <scope>STRUCTURE BY ELECTRON MICROSCOPY (3.98 ANGSTROMS) IN COMPLEX WITH SLC3A2</scope>
    <scope>MUTAGENESIS OF TYR-93; ASN-134; TRP-174; GLY-246 AND THR-402</scope>
    <scope>FUNCTION</scope>
    <scope>TRANSPORTER ACTIVITY</scope>
    <scope>BIOPHYSICOCHEMICAL PROPERTIES</scope>
    <scope>SUBCELLULAR LOCATION</scope>
</reference>
<organism>
    <name type="scientific">Homo sapiens</name>
    <name type="common">Human</name>
    <dbReference type="NCBI Taxonomy" id="9606"/>
    <lineage>
        <taxon>Eukaryota</taxon>
        <taxon>Metazoa</taxon>
        <taxon>Chordata</taxon>
        <taxon>Craniata</taxon>
        <taxon>Vertebrata</taxon>
        <taxon>Euteleostomi</taxon>
        <taxon>Mammalia</taxon>
        <taxon>Eutheria</taxon>
        <taxon>Euarchontoglires</taxon>
        <taxon>Primates</taxon>
        <taxon>Haplorrhini</taxon>
        <taxon>Catarrhini</taxon>
        <taxon>Hominidae</taxon>
        <taxon>Homo</taxon>
    </lineage>
</organism>
<name>LAT2_HUMAN</name>